<accession>A2VEI2</accession>
<accession>Q9VM38</accession>
<name>MICU1_DROME</name>
<feature type="transit peptide" description="Mitochondrion" evidence="2">
    <location>
        <begin position="1"/>
        <end status="unknown"/>
    </location>
</feature>
<feature type="chain" id="PRO_0000399812" description="Calcium uptake protein 1 homolog, mitochondrial">
    <location>
        <begin status="unknown"/>
        <end position="525"/>
    </location>
</feature>
<feature type="domain" description="EF-hand 1" evidence="3">
    <location>
        <begin position="268"/>
        <end position="303"/>
    </location>
</feature>
<feature type="domain" description="EF-hand 2" evidence="3">
    <location>
        <begin position="459"/>
        <end position="494"/>
    </location>
</feature>
<feature type="region of interest" description="Disordered" evidence="4">
    <location>
        <begin position="109"/>
        <end position="146"/>
    </location>
</feature>
<feature type="compositionally biased region" description="Acidic residues" evidence="4">
    <location>
        <begin position="130"/>
        <end position="141"/>
    </location>
</feature>
<feature type="binding site" evidence="3">
    <location>
        <position position="281"/>
    </location>
    <ligand>
        <name>Ca(2+)</name>
        <dbReference type="ChEBI" id="CHEBI:29108"/>
        <label>1</label>
    </ligand>
</feature>
<feature type="binding site" evidence="3">
    <location>
        <position position="283"/>
    </location>
    <ligand>
        <name>Ca(2+)</name>
        <dbReference type="ChEBI" id="CHEBI:29108"/>
        <label>1</label>
    </ligand>
</feature>
<feature type="binding site" evidence="3">
    <location>
        <position position="285"/>
    </location>
    <ligand>
        <name>Ca(2+)</name>
        <dbReference type="ChEBI" id="CHEBI:29108"/>
        <label>1</label>
    </ligand>
</feature>
<feature type="binding site" evidence="3">
    <location>
        <position position="287"/>
    </location>
    <ligand>
        <name>Ca(2+)</name>
        <dbReference type="ChEBI" id="CHEBI:29108"/>
        <label>1</label>
    </ligand>
</feature>
<feature type="binding site" evidence="3">
    <location>
        <position position="292"/>
    </location>
    <ligand>
        <name>Ca(2+)</name>
        <dbReference type="ChEBI" id="CHEBI:29108"/>
        <label>1</label>
    </ligand>
</feature>
<feature type="binding site" evidence="3">
    <location>
        <position position="472"/>
    </location>
    <ligand>
        <name>Ca(2+)</name>
        <dbReference type="ChEBI" id="CHEBI:29108"/>
        <label>2</label>
    </ligand>
</feature>
<feature type="binding site" evidence="3">
    <location>
        <position position="474"/>
    </location>
    <ligand>
        <name>Ca(2+)</name>
        <dbReference type="ChEBI" id="CHEBI:29108"/>
        <label>2</label>
    </ligand>
</feature>
<feature type="binding site" evidence="3">
    <location>
        <position position="476"/>
    </location>
    <ligand>
        <name>Ca(2+)</name>
        <dbReference type="ChEBI" id="CHEBI:29108"/>
        <label>2</label>
    </ligand>
</feature>
<feature type="binding site" evidence="3">
    <location>
        <position position="478"/>
    </location>
    <ligand>
        <name>Ca(2+)</name>
        <dbReference type="ChEBI" id="CHEBI:29108"/>
        <label>2</label>
    </ligand>
</feature>
<feature type="binding site" evidence="3">
    <location>
        <position position="483"/>
    </location>
    <ligand>
        <name>Ca(2+)</name>
        <dbReference type="ChEBI" id="CHEBI:29108"/>
        <label>2</label>
    </ligand>
</feature>
<feature type="splice variant" id="VSP_039911" description="In isoform A." evidence="7">
    <original>VFRYFATIQVPVADDRHEVYMTPTDFLTSMTPGM</original>
    <variation>IFRYFATVRLQDATQTIVCMTPEDFLRSIYPGI</variation>
    <location>
        <begin position="179"/>
        <end position="212"/>
    </location>
</feature>
<gene>
    <name evidence="8 9 11" type="primary">MICU1</name>
    <name evidence="11" type="ORF">CG4495</name>
</gene>
<protein>
    <recommendedName>
        <fullName evidence="10">Calcium uptake protein 1 homolog, mitochondrial</fullName>
    </recommendedName>
    <alternativeName>
        <fullName evidence="8 9 11">Mitochondrial calcium uptake 1</fullName>
    </alternativeName>
</protein>
<keyword id="KW-0025">Alternative splicing</keyword>
<keyword id="KW-0106">Calcium</keyword>
<keyword id="KW-0109">Calcium transport</keyword>
<keyword id="KW-0406">Ion transport</keyword>
<keyword id="KW-0472">Membrane</keyword>
<keyword id="KW-0479">Metal-binding</keyword>
<keyword id="KW-0496">Mitochondrion</keyword>
<keyword id="KW-0999">Mitochondrion inner membrane</keyword>
<keyword id="KW-1185">Reference proteome</keyword>
<keyword id="KW-0677">Repeat</keyword>
<keyword id="KW-0809">Transit peptide</keyword>
<keyword id="KW-0813">Transport</keyword>
<dbReference type="EMBL" id="AE014134">
    <property type="protein sequence ID" value="AAF52489.1"/>
    <property type="molecule type" value="Genomic_DNA"/>
</dbReference>
<dbReference type="EMBL" id="AE014134">
    <property type="protein sequence ID" value="ABV53641.1"/>
    <property type="molecule type" value="Genomic_DNA"/>
</dbReference>
<dbReference type="EMBL" id="AY051995">
    <property type="protein sequence ID" value="AAK93419.1"/>
    <property type="molecule type" value="mRNA"/>
</dbReference>
<dbReference type="EMBL" id="BT030151">
    <property type="protein sequence ID" value="ABN49290.1"/>
    <property type="molecule type" value="mRNA"/>
</dbReference>
<dbReference type="RefSeq" id="NP_001097110.1">
    <molecule id="A2VEI2-1"/>
    <property type="nucleotide sequence ID" value="NM_001103640.2"/>
</dbReference>
<dbReference type="RefSeq" id="NP_609100.1">
    <molecule id="A2VEI2-2"/>
    <property type="nucleotide sequence ID" value="NM_135256.3"/>
</dbReference>
<dbReference type="SMR" id="A2VEI2"/>
<dbReference type="BioGRID" id="60145">
    <property type="interactions" value="1"/>
</dbReference>
<dbReference type="ComplexPortal" id="CPX-2333">
    <property type="entry name" value="Mitochondrial calcium uniporter complex"/>
</dbReference>
<dbReference type="FunCoup" id="A2VEI2">
    <property type="interactions" value="545"/>
</dbReference>
<dbReference type="STRING" id="7227.FBpp0111941"/>
<dbReference type="PaxDb" id="7227-FBpp0111941"/>
<dbReference type="EnsemblMetazoa" id="FBtr0079405">
    <molecule id="A2VEI2-2"/>
    <property type="protein sequence ID" value="FBpp0079033"/>
    <property type="gene ID" value="FBgn0031893"/>
</dbReference>
<dbReference type="EnsemblMetazoa" id="FBtr0113028">
    <molecule id="A2VEI2-1"/>
    <property type="protein sequence ID" value="FBpp0111941"/>
    <property type="gene ID" value="FBgn0031893"/>
</dbReference>
<dbReference type="GeneID" id="33999"/>
<dbReference type="KEGG" id="dme:Dmel_CG4495"/>
<dbReference type="UCSC" id="CG4495-RA">
    <property type="organism name" value="d. melanogaster"/>
</dbReference>
<dbReference type="UCSC" id="CG4495-RB">
    <molecule id="A2VEI2-1"/>
    <property type="organism name" value="d. melanogaster"/>
</dbReference>
<dbReference type="AGR" id="FB:FBgn0031893"/>
<dbReference type="CTD" id="10367"/>
<dbReference type="FlyBase" id="FBgn0031893">
    <property type="gene designation" value="MICU1"/>
</dbReference>
<dbReference type="VEuPathDB" id="VectorBase:FBgn0031893"/>
<dbReference type="eggNOG" id="KOG2643">
    <property type="taxonomic scope" value="Eukaryota"/>
</dbReference>
<dbReference type="GeneTree" id="ENSGT00950000183079"/>
<dbReference type="HOGENOM" id="CLU_027103_3_0_1"/>
<dbReference type="InParanoid" id="A2VEI2"/>
<dbReference type="OMA" id="VRTEVWK"/>
<dbReference type="OrthoDB" id="10056860at2759"/>
<dbReference type="PhylomeDB" id="A2VEI2"/>
<dbReference type="Reactome" id="R-DME-8949215">
    <property type="pathway name" value="Mitochondrial calcium ion transport"/>
</dbReference>
<dbReference type="Reactome" id="R-DME-8949664">
    <property type="pathway name" value="Processing of SMDT1"/>
</dbReference>
<dbReference type="BioGRID-ORCS" id="33999">
    <property type="hits" value="0 hits in 1 CRISPR screen"/>
</dbReference>
<dbReference type="ChiTaRS" id="CG4495">
    <property type="organism name" value="fly"/>
</dbReference>
<dbReference type="GenomeRNAi" id="33999"/>
<dbReference type="PRO" id="PR:A2VEI2"/>
<dbReference type="Proteomes" id="UP000000803">
    <property type="component" value="Chromosome 2L"/>
</dbReference>
<dbReference type="Bgee" id="FBgn0031893">
    <property type="expression patterns" value="Expressed in oviduct (Drosophila) and 129 other cell types or tissues"/>
</dbReference>
<dbReference type="GO" id="GO:0005758">
    <property type="term" value="C:mitochondrial intermembrane space"/>
    <property type="evidence" value="ECO:0007669"/>
    <property type="project" value="UniProtKB-SubCell"/>
</dbReference>
<dbReference type="GO" id="GO:1990246">
    <property type="term" value="C:uniplex complex"/>
    <property type="evidence" value="ECO:0000250"/>
    <property type="project" value="FlyBase"/>
</dbReference>
<dbReference type="GO" id="GO:0005509">
    <property type="term" value="F:calcium ion binding"/>
    <property type="evidence" value="ECO:0000250"/>
    <property type="project" value="FlyBase"/>
</dbReference>
<dbReference type="GO" id="GO:0007615">
    <property type="term" value="P:anesthesia-resistant memory"/>
    <property type="evidence" value="ECO:0000315"/>
    <property type="project" value="FlyBase"/>
</dbReference>
<dbReference type="GO" id="GO:0036444">
    <property type="term" value="P:calcium import into the mitochondrion"/>
    <property type="evidence" value="ECO:0000315"/>
    <property type="project" value="FlyBase"/>
</dbReference>
<dbReference type="GO" id="GO:0072375">
    <property type="term" value="P:medium-term memory"/>
    <property type="evidence" value="ECO:0000315"/>
    <property type="project" value="FlyBase"/>
</dbReference>
<dbReference type="GO" id="GO:0051560">
    <property type="term" value="P:mitochondrial calcium ion homeostasis"/>
    <property type="evidence" value="ECO:0000318"/>
    <property type="project" value="GO_Central"/>
</dbReference>
<dbReference type="GO" id="GO:0051561">
    <property type="term" value="P:positive regulation of mitochondrial calcium ion concentration"/>
    <property type="evidence" value="ECO:0000250"/>
    <property type="project" value="UniProtKB"/>
</dbReference>
<dbReference type="CDD" id="cd15900">
    <property type="entry name" value="EFh_MICU"/>
    <property type="match status" value="1"/>
</dbReference>
<dbReference type="Gene3D" id="1.10.238.10">
    <property type="entry name" value="EF-hand"/>
    <property type="match status" value="2"/>
</dbReference>
<dbReference type="InterPro" id="IPR011992">
    <property type="entry name" value="EF-hand-dom_pair"/>
</dbReference>
<dbReference type="InterPro" id="IPR018247">
    <property type="entry name" value="EF_Hand_1_Ca_BS"/>
</dbReference>
<dbReference type="InterPro" id="IPR002048">
    <property type="entry name" value="EF_hand_dom"/>
</dbReference>
<dbReference type="InterPro" id="IPR039800">
    <property type="entry name" value="MICU1/2/3"/>
</dbReference>
<dbReference type="PANTHER" id="PTHR12294:SF1">
    <property type="entry name" value="CALCIUM UPTAKE PROTEIN 1, MITOCHONDRIAL"/>
    <property type="match status" value="1"/>
</dbReference>
<dbReference type="PANTHER" id="PTHR12294">
    <property type="entry name" value="EF HAND DOMAIN FAMILY A1,A2-RELATED"/>
    <property type="match status" value="1"/>
</dbReference>
<dbReference type="Pfam" id="PF13202">
    <property type="entry name" value="EF-hand_5"/>
    <property type="match status" value="1"/>
</dbReference>
<dbReference type="Pfam" id="PF13833">
    <property type="entry name" value="EF-hand_8"/>
    <property type="match status" value="1"/>
</dbReference>
<dbReference type="SMART" id="SM00054">
    <property type="entry name" value="EFh"/>
    <property type="match status" value="2"/>
</dbReference>
<dbReference type="SUPFAM" id="SSF47473">
    <property type="entry name" value="EF-hand"/>
    <property type="match status" value="2"/>
</dbReference>
<dbReference type="PROSITE" id="PS00018">
    <property type="entry name" value="EF_HAND_1"/>
    <property type="match status" value="2"/>
</dbReference>
<dbReference type="PROSITE" id="PS50222">
    <property type="entry name" value="EF_HAND_2"/>
    <property type="match status" value="2"/>
</dbReference>
<reference key="1">
    <citation type="journal article" date="2000" name="Science">
        <title>The genome sequence of Drosophila melanogaster.</title>
        <authorList>
            <person name="Adams M.D."/>
            <person name="Celniker S.E."/>
            <person name="Holt R.A."/>
            <person name="Evans C.A."/>
            <person name="Gocayne J.D."/>
            <person name="Amanatides P.G."/>
            <person name="Scherer S.E."/>
            <person name="Li P.W."/>
            <person name="Hoskins R.A."/>
            <person name="Galle R.F."/>
            <person name="George R.A."/>
            <person name="Lewis S.E."/>
            <person name="Richards S."/>
            <person name="Ashburner M."/>
            <person name="Henderson S.N."/>
            <person name="Sutton G.G."/>
            <person name="Wortman J.R."/>
            <person name="Yandell M.D."/>
            <person name="Zhang Q."/>
            <person name="Chen L.X."/>
            <person name="Brandon R.C."/>
            <person name="Rogers Y.-H.C."/>
            <person name="Blazej R.G."/>
            <person name="Champe M."/>
            <person name="Pfeiffer B.D."/>
            <person name="Wan K.H."/>
            <person name="Doyle C."/>
            <person name="Baxter E.G."/>
            <person name="Helt G."/>
            <person name="Nelson C.R."/>
            <person name="Miklos G.L.G."/>
            <person name="Abril J.F."/>
            <person name="Agbayani A."/>
            <person name="An H.-J."/>
            <person name="Andrews-Pfannkoch C."/>
            <person name="Baldwin D."/>
            <person name="Ballew R.M."/>
            <person name="Basu A."/>
            <person name="Baxendale J."/>
            <person name="Bayraktaroglu L."/>
            <person name="Beasley E.M."/>
            <person name="Beeson K.Y."/>
            <person name="Benos P.V."/>
            <person name="Berman B.P."/>
            <person name="Bhandari D."/>
            <person name="Bolshakov S."/>
            <person name="Borkova D."/>
            <person name="Botchan M.R."/>
            <person name="Bouck J."/>
            <person name="Brokstein P."/>
            <person name="Brottier P."/>
            <person name="Burtis K.C."/>
            <person name="Busam D.A."/>
            <person name="Butler H."/>
            <person name="Cadieu E."/>
            <person name="Center A."/>
            <person name="Chandra I."/>
            <person name="Cherry J.M."/>
            <person name="Cawley S."/>
            <person name="Dahlke C."/>
            <person name="Davenport L.B."/>
            <person name="Davies P."/>
            <person name="de Pablos B."/>
            <person name="Delcher A."/>
            <person name="Deng Z."/>
            <person name="Mays A.D."/>
            <person name="Dew I."/>
            <person name="Dietz S.M."/>
            <person name="Dodson K."/>
            <person name="Doup L.E."/>
            <person name="Downes M."/>
            <person name="Dugan-Rocha S."/>
            <person name="Dunkov B.C."/>
            <person name="Dunn P."/>
            <person name="Durbin K.J."/>
            <person name="Evangelista C.C."/>
            <person name="Ferraz C."/>
            <person name="Ferriera S."/>
            <person name="Fleischmann W."/>
            <person name="Fosler C."/>
            <person name="Gabrielian A.E."/>
            <person name="Garg N.S."/>
            <person name="Gelbart W.M."/>
            <person name="Glasser K."/>
            <person name="Glodek A."/>
            <person name="Gong F."/>
            <person name="Gorrell J.H."/>
            <person name="Gu Z."/>
            <person name="Guan P."/>
            <person name="Harris M."/>
            <person name="Harris N.L."/>
            <person name="Harvey D.A."/>
            <person name="Heiman T.J."/>
            <person name="Hernandez J.R."/>
            <person name="Houck J."/>
            <person name="Hostin D."/>
            <person name="Houston K.A."/>
            <person name="Howland T.J."/>
            <person name="Wei M.-H."/>
            <person name="Ibegwam C."/>
            <person name="Jalali M."/>
            <person name="Kalush F."/>
            <person name="Karpen G.H."/>
            <person name="Ke Z."/>
            <person name="Kennison J.A."/>
            <person name="Ketchum K.A."/>
            <person name="Kimmel B.E."/>
            <person name="Kodira C.D."/>
            <person name="Kraft C.L."/>
            <person name="Kravitz S."/>
            <person name="Kulp D."/>
            <person name="Lai Z."/>
            <person name="Lasko P."/>
            <person name="Lei Y."/>
            <person name="Levitsky A.A."/>
            <person name="Li J.H."/>
            <person name="Li Z."/>
            <person name="Liang Y."/>
            <person name="Lin X."/>
            <person name="Liu X."/>
            <person name="Mattei B."/>
            <person name="McIntosh T.C."/>
            <person name="McLeod M.P."/>
            <person name="McPherson D."/>
            <person name="Merkulov G."/>
            <person name="Milshina N.V."/>
            <person name="Mobarry C."/>
            <person name="Morris J."/>
            <person name="Moshrefi A."/>
            <person name="Mount S.M."/>
            <person name="Moy M."/>
            <person name="Murphy B."/>
            <person name="Murphy L."/>
            <person name="Muzny D.M."/>
            <person name="Nelson D.L."/>
            <person name="Nelson D.R."/>
            <person name="Nelson K.A."/>
            <person name="Nixon K."/>
            <person name="Nusskern D.R."/>
            <person name="Pacleb J.M."/>
            <person name="Palazzolo M."/>
            <person name="Pittman G.S."/>
            <person name="Pan S."/>
            <person name="Pollard J."/>
            <person name="Puri V."/>
            <person name="Reese M.G."/>
            <person name="Reinert K."/>
            <person name="Remington K."/>
            <person name="Saunders R.D.C."/>
            <person name="Scheeler F."/>
            <person name="Shen H."/>
            <person name="Shue B.C."/>
            <person name="Siden-Kiamos I."/>
            <person name="Simpson M."/>
            <person name="Skupski M.P."/>
            <person name="Smith T.J."/>
            <person name="Spier E."/>
            <person name="Spradling A.C."/>
            <person name="Stapleton M."/>
            <person name="Strong R."/>
            <person name="Sun E."/>
            <person name="Svirskas R."/>
            <person name="Tector C."/>
            <person name="Turner R."/>
            <person name="Venter E."/>
            <person name="Wang A.H."/>
            <person name="Wang X."/>
            <person name="Wang Z.-Y."/>
            <person name="Wassarman D.A."/>
            <person name="Weinstock G.M."/>
            <person name="Weissenbach J."/>
            <person name="Williams S.M."/>
            <person name="Woodage T."/>
            <person name="Worley K.C."/>
            <person name="Wu D."/>
            <person name="Yang S."/>
            <person name="Yao Q.A."/>
            <person name="Ye J."/>
            <person name="Yeh R.-F."/>
            <person name="Zaveri J.S."/>
            <person name="Zhan M."/>
            <person name="Zhang G."/>
            <person name="Zhao Q."/>
            <person name="Zheng L."/>
            <person name="Zheng X.H."/>
            <person name="Zhong F.N."/>
            <person name="Zhong W."/>
            <person name="Zhou X."/>
            <person name="Zhu S.C."/>
            <person name="Zhu X."/>
            <person name="Smith H.O."/>
            <person name="Gibbs R.A."/>
            <person name="Myers E.W."/>
            <person name="Rubin G.M."/>
            <person name="Venter J.C."/>
        </authorList>
    </citation>
    <scope>NUCLEOTIDE SEQUENCE [LARGE SCALE GENOMIC DNA]</scope>
    <source>
        <strain>Berkeley</strain>
    </source>
</reference>
<reference key="2">
    <citation type="journal article" date="2002" name="Genome Biol.">
        <title>Annotation of the Drosophila melanogaster euchromatic genome: a systematic review.</title>
        <authorList>
            <person name="Misra S."/>
            <person name="Crosby M.A."/>
            <person name="Mungall C.J."/>
            <person name="Matthews B.B."/>
            <person name="Campbell K.S."/>
            <person name="Hradecky P."/>
            <person name="Huang Y."/>
            <person name="Kaminker J.S."/>
            <person name="Millburn G.H."/>
            <person name="Prochnik S.E."/>
            <person name="Smith C.D."/>
            <person name="Tupy J.L."/>
            <person name="Whitfield E.J."/>
            <person name="Bayraktaroglu L."/>
            <person name="Berman B.P."/>
            <person name="Bettencourt B.R."/>
            <person name="Celniker S.E."/>
            <person name="de Grey A.D.N.J."/>
            <person name="Drysdale R.A."/>
            <person name="Harris N.L."/>
            <person name="Richter J."/>
            <person name="Russo S."/>
            <person name="Schroeder A.J."/>
            <person name="Shu S.Q."/>
            <person name="Stapleton M."/>
            <person name="Yamada C."/>
            <person name="Ashburner M."/>
            <person name="Gelbart W.M."/>
            <person name="Rubin G.M."/>
            <person name="Lewis S.E."/>
        </authorList>
    </citation>
    <scope>GENOME REANNOTATION</scope>
    <source>
        <strain>Berkeley</strain>
    </source>
</reference>
<reference key="3">
    <citation type="journal article" date="2002" name="Genome Biol.">
        <title>A Drosophila full-length cDNA resource.</title>
        <authorList>
            <person name="Stapleton M."/>
            <person name="Carlson J.W."/>
            <person name="Brokstein P."/>
            <person name="Yu C."/>
            <person name="Champe M."/>
            <person name="George R.A."/>
            <person name="Guarin H."/>
            <person name="Kronmiller B."/>
            <person name="Pacleb J.M."/>
            <person name="Park S."/>
            <person name="Wan K.H."/>
            <person name="Rubin G.M."/>
            <person name="Celniker S.E."/>
        </authorList>
    </citation>
    <scope>NUCLEOTIDE SEQUENCE [LARGE SCALE MRNA] (ISOFORM A)</scope>
    <source>
        <strain>Berkeley</strain>
        <tissue>Embryo</tissue>
    </source>
</reference>
<reference key="4">
    <citation type="submission" date="2007-02" db="EMBL/GenBank/DDBJ databases">
        <authorList>
            <person name="Stapleton M."/>
            <person name="Carlson J."/>
            <person name="Frise E."/>
            <person name="Kapadia B."/>
            <person name="Park S."/>
            <person name="Wan K."/>
            <person name="Yu C."/>
            <person name="Celniker S."/>
        </authorList>
    </citation>
    <scope>NUCLEOTIDE SEQUENCE [LARGE SCALE MRNA] (ISOFORM B)</scope>
    <source>
        <strain>Berkeley</strain>
    </source>
</reference>
<reference key="5">
    <citation type="journal article" date="2016" name="Cell Rep.">
        <title>Inhibiting the Mitochondrial Calcium Uniporter during Development Impairs Memory in Adult Drosophila.</title>
        <authorList>
            <person name="Drago I."/>
            <person name="Davis R.L."/>
        </authorList>
    </citation>
    <scope>FUNCTION</scope>
    <scope>DISRUPTION PHENOTYPE</scope>
</reference>
<reference key="6">
    <citation type="journal article" date="2017" name="Genet. Mol. Res.">
        <title>Inhibition of mitochondrial calcium uptake 1 in Drosophila neurons.</title>
        <authorList>
            <person name="M'Angale P.G."/>
            <person name="Staveley B.E."/>
        </authorList>
    </citation>
    <scope>DISRUPTION PHENOTYPE</scope>
</reference>
<evidence type="ECO:0000250" key="1">
    <source>
        <dbReference type="UniProtKB" id="Q9BPX6"/>
    </source>
</evidence>
<evidence type="ECO:0000255" key="2"/>
<evidence type="ECO:0000255" key="3">
    <source>
        <dbReference type="PROSITE-ProRule" id="PRU00448"/>
    </source>
</evidence>
<evidence type="ECO:0000256" key="4">
    <source>
        <dbReference type="SAM" id="MobiDB-lite"/>
    </source>
</evidence>
<evidence type="ECO:0000269" key="5">
    <source>
    </source>
</evidence>
<evidence type="ECO:0000269" key="6">
    <source>
    </source>
</evidence>
<evidence type="ECO:0000303" key="7">
    <source>
    </source>
</evidence>
<evidence type="ECO:0000303" key="8">
    <source>
    </source>
</evidence>
<evidence type="ECO:0000303" key="9">
    <source>
    </source>
</evidence>
<evidence type="ECO:0000305" key="10"/>
<evidence type="ECO:0000312" key="11">
    <source>
        <dbReference type="FlyBase" id="FBgn0031893"/>
    </source>
</evidence>
<sequence>MSVLRFLVTRQALAALTRPRTLNIIQNPAQIAYASTLCNQNSNHNAKDLTKSSANLSLMQTRGHKRFGHQEEKTPSVTKYFHMFILSLFLISVMDWGKVKRMLTPKVDADAGQRPSSAADVNGEDKSSESESEDSEDEEAGSDLHLHEGKKIREKVGFRERKIIEYENRIRQFSTPDKVFRYFATIQVPVADDRHEVYMTPTDFLTSMTPGMKQPDGLGLDQYRRYDPKSVGEQLNLHLEKNSIFYKLGSYGLITFSDYIFLLTVLSISRRHFEIAFRMFDLNGDGDVDCEEFEMVATLVRQQTSMGTRHRDHANTGNTFKGVNSALITYFFGPNMDEKLTIEKFLDFQEQLQREILSLEFERKEPNDEGNITEADFAELLLAYAGYPLKKKQKKLKRVKRRFRDHGKGISKQDYLDFFHFLNNINDVDTALTFYHIAGASIDQQTLQHVAKTVAMVNLSDHVVDVVFTIFDENNDNQLSNKEFISVMKNRVQRGLEKPKDTGFLKMMRSVFKCAKETKPVLLDI</sequence>
<proteinExistence type="evidence at transcript level"/>
<comment type="function">
    <text evidence="1 5">Calcium sensor of the mitochondrial calcium uniporter (MCU) channel, which senses calcium level via its EF-hand domains (PubMed:27568554). At low calcium levels, MICU1 occludes the pore of the MCU channel, preventing mitochondrial calcium uptake (By similarity). At higher calcium levels, calcium-binding to MICU1 induces a conformational change that weakens MCU-MICU1 interactions and moves MICU1 away from the pore, allowing calcium permeation through the MCU channel (By similarity). Also required to protect against manganese toxicity by preventing manganese uptake by MCU (By similarity). During development, required in alpha/beta or gamma mushroom body neurons to support olfactory intermediate-term memory in the adult (PubMed:27568554).</text>
</comment>
<comment type="subcellular location">
    <subcellularLocation>
        <location evidence="1">Mitochondrion intermembrane space</location>
    </subcellularLocation>
    <subcellularLocation>
        <location evidence="1">Mitochondrion inner membrane</location>
    </subcellularLocation>
</comment>
<comment type="alternative products">
    <event type="alternative splicing"/>
    <isoform>
        <id>A2VEI2-1</id>
        <name>B</name>
        <sequence type="displayed"/>
    </isoform>
    <isoform>
        <id>A2VEI2-2</id>
        <name>A</name>
        <sequence type="described" ref="VSP_039911"/>
    </isoform>
</comment>
<comment type="domain">
    <text evidence="1">The EF-hand domains have high affinity for calcium and act as sensors of calcium levels.</text>
</comment>
<comment type="disruption phenotype">
    <text evidence="5 6">RNAi-mediated knockdown results in lethality (PubMed:27568554). RNAi-mediated knockdown in neurons shortens lifespan and severely impairs climbing ability (PubMed:28198506). RNAi-mediated knockdown in the developing eye decreases ommatidia number and disrupts ommatidial array (PubMed:28198506). RNAi-mediated knockdown in neurons and, more specifically, in alpha/beta or gamma mushroom body neurons, impairs mitochondrial calcium entry and decreases intermediate-term memory after conditioning (PubMed:27568554). Does not affect olfactory learning (PubMed:27568554).</text>
</comment>
<comment type="similarity">
    <text evidence="10">Belongs to the MICU1 family. MICU1 subfamily.</text>
</comment>
<organism>
    <name type="scientific">Drosophila melanogaster</name>
    <name type="common">Fruit fly</name>
    <dbReference type="NCBI Taxonomy" id="7227"/>
    <lineage>
        <taxon>Eukaryota</taxon>
        <taxon>Metazoa</taxon>
        <taxon>Ecdysozoa</taxon>
        <taxon>Arthropoda</taxon>
        <taxon>Hexapoda</taxon>
        <taxon>Insecta</taxon>
        <taxon>Pterygota</taxon>
        <taxon>Neoptera</taxon>
        <taxon>Endopterygota</taxon>
        <taxon>Diptera</taxon>
        <taxon>Brachycera</taxon>
        <taxon>Muscomorpha</taxon>
        <taxon>Ephydroidea</taxon>
        <taxon>Drosophilidae</taxon>
        <taxon>Drosophila</taxon>
        <taxon>Sophophora</taxon>
    </lineage>
</organism>